<feature type="chain" id="PRO_0000243973" description="Uncharacterized protein R566">
    <location>
        <begin position="1"/>
        <end position="182"/>
    </location>
</feature>
<feature type="coiled-coil region" evidence="1">
    <location>
        <begin position="66"/>
        <end position="133"/>
    </location>
</feature>
<proteinExistence type="predicted"/>
<keyword id="KW-0175">Coiled coil</keyword>
<keyword id="KW-1185">Reference proteome</keyword>
<evidence type="ECO:0000255" key="1"/>
<gene>
    <name type="ordered locus">MIMI_R566</name>
</gene>
<sequence length="182" mass="22201">MYSFILDCTTRTAKKVKMHVIDIYNKYHELLVFCRQQLIQKNFEMSKSNAVELYSKRQDEIHDEYQKRKRREIKVIKSDLIELRRQKDEVIENMKTFKHDVVKYKKLYEDLEQEIKILERKNKNLEIETNSDSGNLMVYIANIENILSKCTNKSLKRNIEKQLYKMDEIAYKLKDNFREEFE</sequence>
<accession>Q5UR51</accession>
<dbReference type="EMBL" id="AY653733">
    <property type="protein sequence ID" value="AAV50829.1"/>
    <property type="molecule type" value="Genomic_DNA"/>
</dbReference>
<dbReference type="SMR" id="Q5UR51"/>
<dbReference type="KEGG" id="vg:9925203"/>
<dbReference type="Proteomes" id="UP000001134">
    <property type="component" value="Genome"/>
</dbReference>
<dbReference type="SUPFAM" id="SSF57997">
    <property type="entry name" value="Tropomyosin"/>
    <property type="match status" value="1"/>
</dbReference>
<organismHost>
    <name type="scientific">Acanthamoeba polyphaga</name>
    <name type="common">Amoeba</name>
    <dbReference type="NCBI Taxonomy" id="5757"/>
</organismHost>
<reference key="1">
    <citation type="journal article" date="2004" name="Science">
        <title>The 1.2-megabase genome sequence of Mimivirus.</title>
        <authorList>
            <person name="Raoult D."/>
            <person name="Audic S."/>
            <person name="Robert C."/>
            <person name="Abergel C."/>
            <person name="Renesto P."/>
            <person name="Ogata H."/>
            <person name="La Scola B."/>
            <person name="Susan M."/>
            <person name="Claverie J.-M."/>
        </authorList>
    </citation>
    <scope>NUCLEOTIDE SEQUENCE [LARGE SCALE GENOMIC DNA]</scope>
    <source>
        <strain>Rowbotham-Bradford</strain>
    </source>
</reference>
<name>YR566_MIMIV</name>
<protein>
    <recommendedName>
        <fullName>Uncharacterized protein R566</fullName>
    </recommendedName>
</protein>
<organism>
    <name type="scientific">Acanthamoeba polyphaga mimivirus</name>
    <name type="common">APMV</name>
    <dbReference type="NCBI Taxonomy" id="212035"/>
    <lineage>
        <taxon>Viruses</taxon>
        <taxon>Varidnaviria</taxon>
        <taxon>Bamfordvirae</taxon>
        <taxon>Nucleocytoviricota</taxon>
        <taxon>Megaviricetes</taxon>
        <taxon>Imitervirales</taxon>
        <taxon>Mimiviridae</taxon>
        <taxon>Megamimivirinae</taxon>
        <taxon>Mimivirus</taxon>
        <taxon>Mimivirus bradfordmassiliense</taxon>
    </lineage>
</organism>